<sequence length="277" mass="30329">MNKSAQQKSAHVTTRRLLDMKHNGEKISMLTAYDYTMARILDRAGLDVLLVGDSASNVFAGHSTTLPITIEEMVYHAKAVVRGVHDESGRAMVVVDMPFMSYQISGDEALRNAGKIMKEHGCDALKLEGGKIIADTVKRITDVGIPVMGHLGLMPQSIYKYGSYKVRAKEGVEAEQLLEDAKIIEEAGAFAIVLEKIPSVLAAEVTRSLTIPTIGIGAGVACDGQVLVINDILGLNREFHPRFVRQYADLNTVIEHAAKQYVEDVRQSNFPSPDESY</sequence>
<organism>
    <name type="scientific">Pelodictyon phaeoclathratiforme (strain DSM 5477 / BU-1)</name>
    <dbReference type="NCBI Taxonomy" id="324925"/>
    <lineage>
        <taxon>Bacteria</taxon>
        <taxon>Pseudomonadati</taxon>
        <taxon>Chlorobiota</taxon>
        <taxon>Chlorobiia</taxon>
        <taxon>Chlorobiales</taxon>
        <taxon>Chlorobiaceae</taxon>
        <taxon>Chlorobium/Pelodictyon group</taxon>
        <taxon>Pelodictyon</taxon>
    </lineage>
</organism>
<comment type="function">
    <text evidence="1">Catalyzes the reversible reaction in which hydroxymethyl group from 5,10-methylenetetrahydrofolate is transferred onto alpha-ketoisovalerate to form ketopantoate.</text>
</comment>
<comment type="catalytic activity">
    <reaction evidence="1">
        <text>3-methyl-2-oxobutanoate + (6R)-5,10-methylene-5,6,7,8-tetrahydrofolate + H2O = 2-dehydropantoate + (6S)-5,6,7,8-tetrahydrofolate</text>
        <dbReference type="Rhea" id="RHEA:11824"/>
        <dbReference type="ChEBI" id="CHEBI:11561"/>
        <dbReference type="ChEBI" id="CHEBI:11851"/>
        <dbReference type="ChEBI" id="CHEBI:15377"/>
        <dbReference type="ChEBI" id="CHEBI:15636"/>
        <dbReference type="ChEBI" id="CHEBI:57453"/>
        <dbReference type="EC" id="2.1.2.11"/>
    </reaction>
</comment>
<comment type="cofactor">
    <cofactor evidence="1">
        <name>Mg(2+)</name>
        <dbReference type="ChEBI" id="CHEBI:18420"/>
    </cofactor>
    <text evidence="1">Binds 1 Mg(2+) ion per subunit.</text>
</comment>
<comment type="pathway">
    <text evidence="1">Cofactor biosynthesis; (R)-pantothenate biosynthesis; (R)-pantoate from 3-methyl-2-oxobutanoate: step 1/2.</text>
</comment>
<comment type="subunit">
    <text evidence="1">Homodecamer; pentamer of dimers.</text>
</comment>
<comment type="subcellular location">
    <subcellularLocation>
        <location evidence="1">Cytoplasm</location>
    </subcellularLocation>
</comment>
<comment type="similarity">
    <text evidence="1">Belongs to the PanB family.</text>
</comment>
<keyword id="KW-0963">Cytoplasm</keyword>
<keyword id="KW-0460">Magnesium</keyword>
<keyword id="KW-0479">Metal-binding</keyword>
<keyword id="KW-0566">Pantothenate biosynthesis</keyword>
<keyword id="KW-1185">Reference proteome</keyword>
<keyword id="KW-0808">Transferase</keyword>
<protein>
    <recommendedName>
        <fullName evidence="1">3-methyl-2-oxobutanoate hydroxymethyltransferase</fullName>
        <ecNumber evidence="1">2.1.2.11</ecNumber>
    </recommendedName>
    <alternativeName>
        <fullName evidence="1">Ketopantoate hydroxymethyltransferase</fullName>
        <shortName evidence="1">KPHMT</shortName>
    </alternativeName>
</protein>
<dbReference type="EC" id="2.1.2.11" evidence="1"/>
<dbReference type="EMBL" id="CP001110">
    <property type="protein sequence ID" value="ACF43865.1"/>
    <property type="molecule type" value="Genomic_DNA"/>
</dbReference>
<dbReference type="RefSeq" id="WP_012508352.1">
    <property type="nucleotide sequence ID" value="NC_011060.1"/>
</dbReference>
<dbReference type="SMR" id="B4SAH9"/>
<dbReference type="STRING" id="324925.Ppha_1628"/>
<dbReference type="KEGG" id="pph:Ppha_1628"/>
<dbReference type="eggNOG" id="COG0413">
    <property type="taxonomic scope" value="Bacteria"/>
</dbReference>
<dbReference type="HOGENOM" id="CLU_036645_1_0_10"/>
<dbReference type="OrthoDB" id="9781789at2"/>
<dbReference type="UniPathway" id="UPA00028">
    <property type="reaction ID" value="UER00003"/>
</dbReference>
<dbReference type="Proteomes" id="UP000002724">
    <property type="component" value="Chromosome"/>
</dbReference>
<dbReference type="GO" id="GO:0005737">
    <property type="term" value="C:cytoplasm"/>
    <property type="evidence" value="ECO:0007669"/>
    <property type="project" value="UniProtKB-SubCell"/>
</dbReference>
<dbReference type="GO" id="GO:0003864">
    <property type="term" value="F:3-methyl-2-oxobutanoate hydroxymethyltransferase activity"/>
    <property type="evidence" value="ECO:0007669"/>
    <property type="project" value="UniProtKB-UniRule"/>
</dbReference>
<dbReference type="GO" id="GO:0000287">
    <property type="term" value="F:magnesium ion binding"/>
    <property type="evidence" value="ECO:0007669"/>
    <property type="project" value="TreeGrafter"/>
</dbReference>
<dbReference type="GO" id="GO:0015940">
    <property type="term" value="P:pantothenate biosynthetic process"/>
    <property type="evidence" value="ECO:0007669"/>
    <property type="project" value="UniProtKB-UniRule"/>
</dbReference>
<dbReference type="CDD" id="cd06557">
    <property type="entry name" value="KPHMT-like"/>
    <property type="match status" value="1"/>
</dbReference>
<dbReference type="FunFam" id="3.20.20.60:FF:000003">
    <property type="entry name" value="3-methyl-2-oxobutanoate hydroxymethyltransferase"/>
    <property type="match status" value="1"/>
</dbReference>
<dbReference type="Gene3D" id="3.20.20.60">
    <property type="entry name" value="Phosphoenolpyruvate-binding domains"/>
    <property type="match status" value="1"/>
</dbReference>
<dbReference type="HAMAP" id="MF_00156">
    <property type="entry name" value="PanB"/>
    <property type="match status" value="1"/>
</dbReference>
<dbReference type="InterPro" id="IPR003700">
    <property type="entry name" value="Pantoate_hydroxy_MeTrfase"/>
</dbReference>
<dbReference type="InterPro" id="IPR015813">
    <property type="entry name" value="Pyrv/PenolPyrv_kinase-like_dom"/>
</dbReference>
<dbReference type="InterPro" id="IPR040442">
    <property type="entry name" value="Pyrv_kinase-like_dom_sf"/>
</dbReference>
<dbReference type="NCBIfam" id="TIGR00222">
    <property type="entry name" value="panB"/>
    <property type="match status" value="1"/>
</dbReference>
<dbReference type="NCBIfam" id="NF001452">
    <property type="entry name" value="PRK00311.1"/>
    <property type="match status" value="1"/>
</dbReference>
<dbReference type="PANTHER" id="PTHR20881">
    <property type="entry name" value="3-METHYL-2-OXOBUTANOATE HYDROXYMETHYLTRANSFERASE"/>
    <property type="match status" value="1"/>
</dbReference>
<dbReference type="PANTHER" id="PTHR20881:SF0">
    <property type="entry name" value="3-METHYL-2-OXOBUTANOATE HYDROXYMETHYLTRANSFERASE"/>
    <property type="match status" value="1"/>
</dbReference>
<dbReference type="Pfam" id="PF02548">
    <property type="entry name" value="Pantoate_transf"/>
    <property type="match status" value="1"/>
</dbReference>
<dbReference type="PIRSF" id="PIRSF000388">
    <property type="entry name" value="Pantoate_hydroxy_MeTrfase"/>
    <property type="match status" value="1"/>
</dbReference>
<dbReference type="SUPFAM" id="SSF51621">
    <property type="entry name" value="Phosphoenolpyruvate/pyruvate domain"/>
    <property type="match status" value="1"/>
</dbReference>
<name>PANB_PELPB</name>
<reference key="1">
    <citation type="submission" date="2008-06" db="EMBL/GenBank/DDBJ databases">
        <title>Complete sequence of Pelodictyon phaeoclathratiforme BU-1.</title>
        <authorList>
            <consortium name="US DOE Joint Genome Institute"/>
            <person name="Lucas S."/>
            <person name="Copeland A."/>
            <person name="Lapidus A."/>
            <person name="Glavina del Rio T."/>
            <person name="Dalin E."/>
            <person name="Tice H."/>
            <person name="Bruce D."/>
            <person name="Goodwin L."/>
            <person name="Pitluck S."/>
            <person name="Schmutz J."/>
            <person name="Larimer F."/>
            <person name="Land M."/>
            <person name="Hauser L."/>
            <person name="Kyrpides N."/>
            <person name="Mikhailova N."/>
            <person name="Liu Z."/>
            <person name="Li T."/>
            <person name="Zhao F."/>
            <person name="Overmann J."/>
            <person name="Bryant D.A."/>
            <person name="Richardson P."/>
        </authorList>
    </citation>
    <scope>NUCLEOTIDE SEQUENCE [LARGE SCALE GENOMIC DNA]</scope>
    <source>
        <strain>DSM 5477 / BU-1</strain>
    </source>
</reference>
<evidence type="ECO:0000255" key="1">
    <source>
        <dbReference type="HAMAP-Rule" id="MF_00156"/>
    </source>
</evidence>
<feature type="chain" id="PRO_1000096989" description="3-methyl-2-oxobutanoate hydroxymethyltransferase">
    <location>
        <begin position="1"/>
        <end position="277"/>
    </location>
</feature>
<feature type="active site" description="Proton acceptor" evidence="1">
    <location>
        <position position="195"/>
    </location>
</feature>
<feature type="binding site" evidence="1">
    <location>
        <begin position="53"/>
        <end position="54"/>
    </location>
    <ligand>
        <name>3-methyl-2-oxobutanoate</name>
        <dbReference type="ChEBI" id="CHEBI:11851"/>
    </ligand>
</feature>
<feature type="binding site" evidence="1">
    <location>
        <position position="53"/>
    </location>
    <ligand>
        <name>Mg(2+)</name>
        <dbReference type="ChEBI" id="CHEBI:18420"/>
    </ligand>
</feature>
<feature type="binding site" evidence="1">
    <location>
        <position position="96"/>
    </location>
    <ligand>
        <name>3-methyl-2-oxobutanoate</name>
        <dbReference type="ChEBI" id="CHEBI:11851"/>
    </ligand>
</feature>
<feature type="binding site" evidence="1">
    <location>
        <position position="96"/>
    </location>
    <ligand>
        <name>Mg(2+)</name>
        <dbReference type="ChEBI" id="CHEBI:18420"/>
    </ligand>
</feature>
<feature type="binding site" evidence="1">
    <location>
        <position position="126"/>
    </location>
    <ligand>
        <name>3-methyl-2-oxobutanoate</name>
        <dbReference type="ChEBI" id="CHEBI:11851"/>
    </ligand>
</feature>
<feature type="binding site" evidence="1">
    <location>
        <position position="128"/>
    </location>
    <ligand>
        <name>Mg(2+)</name>
        <dbReference type="ChEBI" id="CHEBI:18420"/>
    </ligand>
</feature>
<accession>B4SAH9</accession>
<proteinExistence type="inferred from homology"/>
<gene>
    <name evidence="1" type="primary">panB</name>
    <name type="ordered locus">Ppha_1628</name>
</gene>